<organism>
    <name type="scientific">Nitrosococcus oceani (strain ATCC 19707 / BCRC 17464 / JCM 30415 / NCIMB 11848 / C-107)</name>
    <dbReference type="NCBI Taxonomy" id="323261"/>
    <lineage>
        <taxon>Bacteria</taxon>
        <taxon>Pseudomonadati</taxon>
        <taxon>Pseudomonadota</taxon>
        <taxon>Gammaproteobacteria</taxon>
        <taxon>Chromatiales</taxon>
        <taxon>Chromatiaceae</taxon>
        <taxon>Nitrosococcus</taxon>
    </lineage>
</organism>
<evidence type="ECO:0000250" key="1"/>
<evidence type="ECO:0000255" key="2">
    <source>
        <dbReference type="HAMAP-Rule" id="MF_01109"/>
    </source>
</evidence>
<comment type="function">
    <text evidence="1">Reversibly catalyzes the transfer of the carbamoyl group from carbamoyl phosphate (CP) to the N(epsilon) atom of ornithine (ORN) to produce L-citrulline.</text>
</comment>
<comment type="catalytic activity">
    <reaction evidence="2">
        <text>carbamoyl phosphate + L-ornithine = L-citrulline + phosphate + H(+)</text>
        <dbReference type="Rhea" id="RHEA:19513"/>
        <dbReference type="ChEBI" id="CHEBI:15378"/>
        <dbReference type="ChEBI" id="CHEBI:43474"/>
        <dbReference type="ChEBI" id="CHEBI:46911"/>
        <dbReference type="ChEBI" id="CHEBI:57743"/>
        <dbReference type="ChEBI" id="CHEBI:58228"/>
        <dbReference type="EC" id="2.1.3.3"/>
    </reaction>
</comment>
<comment type="pathway">
    <text evidence="2">Amino-acid biosynthesis; L-arginine biosynthesis; L-arginine from L-ornithine and carbamoyl phosphate: step 1/3.</text>
</comment>
<comment type="subcellular location">
    <subcellularLocation>
        <location evidence="2">Cytoplasm</location>
    </subcellularLocation>
</comment>
<comment type="similarity">
    <text evidence="2">Belongs to the aspartate/ornithine carbamoyltransferase superfamily. OTCase family.</text>
</comment>
<dbReference type="EC" id="2.1.3.3" evidence="2"/>
<dbReference type="EMBL" id="CP000127">
    <property type="protein sequence ID" value="ABA58886.1"/>
    <property type="molecule type" value="Genomic_DNA"/>
</dbReference>
<dbReference type="RefSeq" id="WP_011330963.1">
    <property type="nucleotide sequence ID" value="NC_007484.1"/>
</dbReference>
<dbReference type="SMR" id="Q3J8G0"/>
<dbReference type="FunCoup" id="Q3J8G0">
    <property type="interactions" value="441"/>
</dbReference>
<dbReference type="STRING" id="323261.Noc_2430"/>
<dbReference type="KEGG" id="noc:Noc_2430"/>
<dbReference type="eggNOG" id="COG0078">
    <property type="taxonomic scope" value="Bacteria"/>
</dbReference>
<dbReference type="HOGENOM" id="CLU_043846_3_2_6"/>
<dbReference type="InParanoid" id="Q3J8G0"/>
<dbReference type="UniPathway" id="UPA00068">
    <property type="reaction ID" value="UER00112"/>
</dbReference>
<dbReference type="Proteomes" id="UP000006838">
    <property type="component" value="Chromosome"/>
</dbReference>
<dbReference type="GO" id="GO:0005737">
    <property type="term" value="C:cytoplasm"/>
    <property type="evidence" value="ECO:0007669"/>
    <property type="project" value="UniProtKB-SubCell"/>
</dbReference>
<dbReference type="GO" id="GO:0016597">
    <property type="term" value="F:amino acid binding"/>
    <property type="evidence" value="ECO:0007669"/>
    <property type="project" value="InterPro"/>
</dbReference>
<dbReference type="GO" id="GO:0004585">
    <property type="term" value="F:ornithine carbamoyltransferase activity"/>
    <property type="evidence" value="ECO:0007669"/>
    <property type="project" value="UniProtKB-UniRule"/>
</dbReference>
<dbReference type="GO" id="GO:0042450">
    <property type="term" value="P:arginine biosynthetic process via ornithine"/>
    <property type="evidence" value="ECO:0007669"/>
    <property type="project" value="TreeGrafter"/>
</dbReference>
<dbReference type="GO" id="GO:0019240">
    <property type="term" value="P:citrulline biosynthetic process"/>
    <property type="evidence" value="ECO:0007669"/>
    <property type="project" value="TreeGrafter"/>
</dbReference>
<dbReference type="GO" id="GO:0006526">
    <property type="term" value="P:L-arginine biosynthetic process"/>
    <property type="evidence" value="ECO:0007669"/>
    <property type="project" value="UniProtKB-UniRule"/>
</dbReference>
<dbReference type="FunFam" id="3.40.50.1370:FF:000008">
    <property type="entry name" value="Ornithine carbamoyltransferase"/>
    <property type="match status" value="1"/>
</dbReference>
<dbReference type="Gene3D" id="3.40.50.1370">
    <property type="entry name" value="Aspartate/ornithine carbamoyltransferase"/>
    <property type="match status" value="2"/>
</dbReference>
<dbReference type="HAMAP" id="MF_01109">
    <property type="entry name" value="OTCase"/>
    <property type="match status" value="1"/>
</dbReference>
<dbReference type="InterPro" id="IPR006132">
    <property type="entry name" value="Asp/Orn_carbamoyltranf_P-bd"/>
</dbReference>
<dbReference type="InterPro" id="IPR006130">
    <property type="entry name" value="Asp/Orn_carbamoylTrfase"/>
</dbReference>
<dbReference type="InterPro" id="IPR036901">
    <property type="entry name" value="Asp/Orn_carbamoylTrfase_sf"/>
</dbReference>
<dbReference type="InterPro" id="IPR006131">
    <property type="entry name" value="Asp_carbamoyltransf_Asp/Orn-bd"/>
</dbReference>
<dbReference type="InterPro" id="IPR002292">
    <property type="entry name" value="Orn/put_carbamltrans"/>
</dbReference>
<dbReference type="InterPro" id="IPR024904">
    <property type="entry name" value="OTCase_ArgI"/>
</dbReference>
<dbReference type="NCBIfam" id="TIGR00658">
    <property type="entry name" value="orni_carb_tr"/>
    <property type="match status" value="1"/>
</dbReference>
<dbReference type="NCBIfam" id="NF001986">
    <property type="entry name" value="PRK00779.1"/>
    <property type="match status" value="1"/>
</dbReference>
<dbReference type="PANTHER" id="PTHR45753">
    <property type="entry name" value="ORNITHINE CARBAMOYLTRANSFERASE, MITOCHONDRIAL"/>
    <property type="match status" value="1"/>
</dbReference>
<dbReference type="PANTHER" id="PTHR45753:SF3">
    <property type="entry name" value="ORNITHINE TRANSCARBAMYLASE, MITOCHONDRIAL"/>
    <property type="match status" value="1"/>
</dbReference>
<dbReference type="Pfam" id="PF00185">
    <property type="entry name" value="OTCace"/>
    <property type="match status" value="1"/>
</dbReference>
<dbReference type="Pfam" id="PF02729">
    <property type="entry name" value="OTCace_N"/>
    <property type="match status" value="1"/>
</dbReference>
<dbReference type="PRINTS" id="PR00100">
    <property type="entry name" value="AOTCASE"/>
</dbReference>
<dbReference type="PRINTS" id="PR00102">
    <property type="entry name" value="OTCASE"/>
</dbReference>
<dbReference type="SUPFAM" id="SSF53671">
    <property type="entry name" value="Aspartate/ornithine carbamoyltransferase"/>
    <property type="match status" value="1"/>
</dbReference>
<dbReference type="PROSITE" id="PS00097">
    <property type="entry name" value="CARBAMOYLTRANSFERASE"/>
    <property type="match status" value="1"/>
</dbReference>
<keyword id="KW-0028">Amino-acid biosynthesis</keyword>
<keyword id="KW-0055">Arginine biosynthesis</keyword>
<keyword id="KW-0963">Cytoplasm</keyword>
<keyword id="KW-1185">Reference proteome</keyword>
<keyword id="KW-0808">Transferase</keyword>
<gene>
    <name evidence="2" type="primary">argF</name>
    <name type="ordered locus">Noc_2430</name>
</gene>
<protein>
    <recommendedName>
        <fullName evidence="2">Ornithine carbamoyltransferase</fullName>
        <shortName evidence="2">OTCase</shortName>
        <ecNumber evidence="2">2.1.3.3</ecNumber>
    </recommendedName>
</protein>
<name>OTC_NITOC</name>
<reference key="1">
    <citation type="journal article" date="2006" name="Appl. Environ. Microbiol.">
        <title>Complete genome sequence of the marine, chemolithoautotrophic, ammonia-oxidizing bacterium Nitrosococcus oceani ATCC 19707.</title>
        <authorList>
            <person name="Klotz M.G."/>
            <person name="Arp D.J."/>
            <person name="Chain P.S.G."/>
            <person name="El-Sheikh A.F."/>
            <person name="Hauser L.J."/>
            <person name="Hommes N.G."/>
            <person name="Larimer F.W."/>
            <person name="Malfatti S.A."/>
            <person name="Norton J.M."/>
            <person name="Poret-Peterson A.T."/>
            <person name="Vergez L.M."/>
            <person name="Ward B.B."/>
        </authorList>
    </citation>
    <scope>NUCLEOTIDE SEQUENCE [LARGE SCALE GENOMIC DNA]</scope>
    <source>
        <strain>ATCC 19707 / BCRC 17464 / JCM 30415 / NCIMB 11848 / C-107</strain>
    </source>
</reference>
<feature type="chain" id="PRO_1000065108" description="Ornithine carbamoyltransferase">
    <location>
        <begin position="1"/>
        <end position="304"/>
    </location>
</feature>
<feature type="binding site" evidence="2">
    <location>
        <begin position="53"/>
        <end position="56"/>
    </location>
    <ligand>
        <name>carbamoyl phosphate</name>
        <dbReference type="ChEBI" id="CHEBI:58228"/>
    </ligand>
</feature>
<feature type="binding site" evidence="2">
    <location>
        <position position="80"/>
    </location>
    <ligand>
        <name>carbamoyl phosphate</name>
        <dbReference type="ChEBI" id="CHEBI:58228"/>
    </ligand>
</feature>
<feature type="binding site" evidence="2">
    <location>
        <position position="104"/>
    </location>
    <ligand>
        <name>carbamoyl phosphate</name>
        <dbReference type="ChEBI" id="CHEBI:58228"/>
    </ligand>
</feature>
<feature type="binding site" evidence="2">
    <location>
        <begin position="131"/>
        <end position="134"/>
    </location>
    <ligand>
        <name>carbamoyl phosphate</name>
        <dbReference type="ChEBI" id="CHEBI:58228"/>
    </ligand>
</feature>
<feature type="binding site" evidence="2">
    <location>
        <position position="162"/>
    </location>
    <ligand>
        <name>L-ornithine</name>
        <dbReference type="ChEBI" id="CHEBI:46911"/>
    </ligand>
</feature>
<feature type="binding site" evidence="2">
    <location>
        <position position="219"/>
    </location>
    <ligand>
        <name>L-ornithine</name>
        <dbReference type="ChEBI" id="CHEBI:46911"/>
    </ligand>
</feature>
<feature type="binding site" evidence="2">
    <location>
        <begin position="223"/>
        <end position="224"/>
    </location>
    <ligand>
        <name>L-ornithine</name>
        <dbReference type="ChEBI" id="CHEBI:46911"/>
    </ligand>
</feature>
<feature type="binding site" evidence="2">
    <location>
        <begin position="259"/>
        <end position="260"/>
    </location>
    <ligand>
        <name>carbamoyl phosphate</name>
        <dbReference type="ChEBI" id="CHEBI:58228"/>
    </ligand>
</feature>
<feature type="binding site" evidence="2">
    <location>
        <position position="287"/>
    </location>
    <ligand>
        <name>carbamoyl phosphate</name>
        <dbReference type="ChEBI" id="CHEBI:58228"/>
    </ligand>
</feature>
<sequence length="304" mass="34197">MTVPHFLTLFDLPADEIRQLVRRAIDLKALQRQGKIYEPLKNQVLGMLFEKSSTRTRVSFEVGMIQLGGNAVFLSPRDTQLGRGEPLEDTARVLSRMVDCLMVRTFSHSMLEHFSAYSQVPVINALTDSYHPCQLLADIQTYFEHRGDIQGRTVAWIGDGNNMCQSYINAACQFDFQLHIATPAGYGPDPAILQMARERVQIIAEPREAVRGADLVVTDVWTSMGQEKEKHRRLQDLADYQVNGELMSLAKRDALFMHCLPAHRGEEVSAEVIDGPQSVVWDEAENRLHAQKALLEKLLIGGPL</sequence>
<accession>Q3J8G0</accession>
<proteinExistence type="inferred from homology"/>